<dbReference type="EC" id="3.4.21.-"/>
<dbReference type="EMBL" id="AY862981">
    <property type="protein sequence ID" value="AAW57543.1"/>
    <property type="molecule type" value="Genomic_DNA"/>
</dbReference>
<dbReference type="EMBL" id="AY862897">
    <property type="protein sequence ID" value="AAW57543.1"/>
    <property type="status" value="JOINED"/>
    <property type="molecule type" value="Genomic_DNA"/>
</dbReference>
<dbReference type="EMBL" id="AY862904">
    <property type="protein sequence ID" value="AAW57543.1"/>
    <property type="status" value="JOINED"/>
    <property type="molecule type" value="Genomic_DNA"/>
</dbReference>
<dbReference type="EMBL" id="AY862911">
    <property type="protein sequence ID" value="AAW57543.1"/>
    <property type="status" value="JOINED"/>
    <property type="molecule type" value="Genomic_DNA"/>
</dbReference>
<dbReference type="EMBL" id="AY862918">
    <property type="protein sequence ID" value="AAW57543.1"/>
    <property type="status" value="JOINED"/>
    <property type="molecule type" value="Genomic_DNA"/>
</dbReference>
<dbReference type="EMBL" id="AY862925">
    <property type="protein sequence ID" value="AAW57543.1"/>
    <property type="status" value="JOINED"/>
    <property type="molecule type" value="Genomic_DNA"/>
</dbReference>
<dbReference type="EMBL" id="AY862932">
    <property type="protein sequence ID" value="AAW57543.1"/>
    <property type="status" value="JOINED"/>
    <property type="molecule type" value="Genomic_DNA"/>
</dbReference>
<dbReference type="EMBL" id="AY862939">
    <property type="protein sequence ID" value="AAW57543.1"/>
    <property type="status" value="JOINED"/>
    <property type="molecule type" value="Genomic_DNA"/>
</dbReference>
<dbReference type="EMBL" id="AY862946">
    <property type="protein sequence ID" value="AAW57543.1"/>
    <property type="status" value="JOINED"/>
    <property type="molecule type" value="Genomic_DNA"/>
</dbReference>
<dbReference type="EMBL" id="AY862953">
    <property type="protein sequence ID" value="AAW57543.1"/>
    <property type="status" value="JOINED"/>
    <property type="molecule type" value="Genomic_DNA"/>
</dbReference>
<dbReference type="EMBL" id="AY862960">
    <property type="protein sequence ID" value="AAW57543.1"/>
    <property type="status" value="JOINED"/>
    <property type="molecule type" value="Genomic_DNA"/>
</dbReference>
<dbReference type="EMBL" id="AY862967">
    <property type="protein sequence ID" value="AAW57543.1"/>
    <property type="status" value="JOINED"/>
    <property type="molecule type" value="Genomic_DNA"/>
</dbReference>
<dbReference type="EMBL" id="AY862974">
    <property type="protein sequence ID" value="AAW57543.1"/>
    <property type="status" value="JOINED"/>
    <property type="molecule type" value="Genomic_DNA"/>
</dbReference>
<dbReference type="GlyCosmos" id="Q5G266">
    <property type="glycosylation" value="2 sites, No reported glycans"/>
</dbReference>
<dbReference type="GO" id="GO:0030424">
    <property type="term" value="C:axon"/>
    <property type="evidence" value="ECO:0000250"/>
    <property type="project" value="UniProtKB"/>
</dbReference>
<dbReference type="GO" id="GO:0005576">
    <property type="term" value="C:extracellular region"/>
    <property type="evidence" value="ECO:0007669"/>
    <property type="project" value="UniProtKB-SubCell"/>
</dbReference>
<dbReference type="GO" id="GO:0005886">
    <property type="term" value="C:plasma membrane"/>
    <property type="evidence" value="ECO:0000250"/>
    <property type="project" value="UniProtKB"/>
</dbReference>
<dbReference type="GO" id="GO:0004252">
    <property type="term" value="F:serine-type endopeptidase activity"/>
    <property type="evidence" value="ECO:0007669"/>
    <property type="project" value="InterPro"/>
</dbReference>
<dbReference type="GO" id="GO:0006887">
    <property type="term" value="P:exocytosis"/>
    <property type="evidence" value="ECO:0000250"/>
    <property type="project" value="UniProtKB"/>
</dbReference>
<dbReference type="GO" id="GO:0006508">
    <property type="term" value="P:proteolysis"/>
    <property type="evidence" value="ECO:0007669"/>
    <property type="project" value="UniProtKB-KW"/>
</dbReference>
<dbReference type="CDD" id="cd00190">
    <property type="entry name" value="Tryp_SPc"/>
    <property type="match status" value="1"/>
</dbReference>
<dbReference type="FunFam" id="2.40.10.10:FF:000053">
    <property type="entry name" value="Neurotrypsin"/>
    <property type="match status" value="1"/>
</dbReference>
<dbReference type="FunFam" id="2.40.20.10:FF:000010">
    <property type="entry name" value="Neurotrypsin"/>
    <property type="match status" value="1"/>
</dbReference>
<dbReference type="FunFam" id="3.10.250.10:FF:000019">
    <property type="entry name" value="Neurotrypsin"/>
    <property type="match status" value="1"/>
</dbReference>
<dbReference type="FunFam" id="3.10.250.10:FF:000005">
    <property type="entry name" value="Neurotrypsin isoform A"/>
    <property type="match status" value="2"/>
</dbReference>
<dbReference type="FunFam" id="3.10.250.10:FF:000006">
    <property type="entry name" value="neurotrypsin isoform X2"/>
    <property type="match status" value="1"/>
</dbReference>
<dbReference type="Gene3D" id="2.40.20.10">
    <property type="entry name" value="Plasminogen Kringle 4"/>
    <property type="match status" value="1"/>
</dbReference>
<dbReference type="Gene3D" id="3.10.250.10">
    <property type="entry name" value="SRCR-like domain"/>
    <property type="match status" value="4"/>
</dbReference>
<dbReference type="Gene3D" id="2.40.10.10">
    <property type="entry name" value="Trypsin-like serine proteases"/>
    <property type="match status" value="1"/>
</dbReference>
<dbReference type="InterPro" id="IPR000001">
    <property type="entry name" value="Kringle"/>
</dbReference>
<dbReference type="InterPro" id="IPR013806">
    <property type="entry name" value="Kringle-like"/>
</dbReference>
<dbReference type="InterPro" id="IPR018056">
    <property type="entry name" value="Kringle_CS"/>
</dbReference>
<dbReference type="InterPro" id="IPR038178">
    <property type="entry name" value="Kringle_sf"/>
</dbReference>
<dbReference type="InterPro" id="IPR009003">
    <property type="entry name" value="Peptidase_S1_PA"/>
</dbReference>
<dbReference type="InterPro" id="IPR043504">
    <property type="entry name" value="Peptidase_S1_PA_chymotrypsin"/>
</dbReference>
<dbReference type="InterPro" id="IPR001314">
    <property type="entry name" value="Peptidase_S1A"/>
</dbReference>
<dbReference type="InterPro" id="IPR001190">
    <property type="entry name" value="SRCR"/>
</dbReference>
<dbReference type="InterPro" id="IPR036772">
    <property type="entry name" value="SRCR-like_dom_sf"/>
</dbReference>
<dbReference type="InterPro" id="IPR001254">
    <property type="entry name" value="Trypsin_dom"/>
</dbReference>
<dbReference type="InterPro" id="IPR018114">
    <property type="entry name" value="TRYPSIN_HIS"/>
</dbReference>
<dbReference type="InterPro" id="IPR033116">
    <property type="entry name" value="TRYPSIN_SER"/>
</dbReference>
<dbReference type="PANTHER" id="PTHR19331:SF465">
    <property type="entry name" value="EGG PEPTIDE SPERACT RECEPTOR"/>
    <property type="match status" value="1"/>
</dbReference>
<dbReference type="PANTHER" id="PTHR19331">
    <property type="entry name" value="SCAVENGER RECEPTOR DOMAIN-CONTAINING"/>
    <property type="match status" value="1"/>
</dbReference>
<dbReference type="Pfam" id="PF00051">
    <property type="entry name" value="Kringle"/>
    <property type="match status" value="1"/>
</dbReference>
<dbReference type="Pfam" id="PF00530">
    <property type="entry name" value="SRCR"/>
    <property type="match status" value="4"/>
</dbReference>
<dbReference type="Pfam" id="PF00089">
    <property type="entry name" value="Trypsin"/>
    <property type="match status" value="1"/>
</dbReference>
<dbReference type="PRINTS" id="PR00722">
    <property type="entry name" value="CHYMOTRYPSIN"/>
</dbReference>
<dbReference type="PRINTS" id="PR00258">
    <property type="entry name" value="SPERACTRCPTR"/>
</dbReference>
<dbReference type="SMART" id="SM00130">
    <property type="entry name" value="KR"/>
    <property type="match status" value="1"/>
</dbReference>
<dbReference type="SMART" id="SM00202">
    <property type="entry name" value="SR"/>
    <property type="match status" value="4"/>
</dbReference>
<dbReference type="SMART" id="SM00020">
    <property type="entry name" value="Tryp_SPc"/>
    <property type="match status" value="1"/>
</dbReference>
<dbReference type="SUPFAM" id="SSF57440">
    <property type="entry name" value="Kringle-like"/>
    <property type="match status" value="1"/>
</dbReference>
<dbReference type="SUPFAM" id="SSF56487">
    <property type="entry name" value="SRCR-like"/>
    <property type="match status" value="4"/>
</dbReference>
<dbReference type="SUPFAM" id="SSF50494">
    <property type="entry name" value="Trypsin-like serine proteases"/>
    <property type="match status" value="1"/>
</dbReference>
<dbReference type="PROSITE" id="PS00021">
    <property type="entry name" value="KRINGLE_1"/>
    <property type="match status" value="1"/>
</dbReference>
<dbReference type="PROSITE" id="PS50070">
    <property type="entry name" value="KRINGLE_2"/>
    <property type="match status" value="1"/>
</dbReference>
<dbReference type="PROSITE" id="PS00420">
    <property type="entry name" value="SRCR_1"/>
    <property type="match status" value="3"/>
</dbReference>
<dbReference type="PROSITE" id="PS50287">
    <property type="entry name" value="SRCR_2"/>
    <property type="match status" value="4"/>
</dbReference>
<dbReference type="PROSITE" id="PS50240">
    <property type="entry name" value="TRYPSIN_DOM"/>
    <property type="match status" value="1"/>
</dbReference>
<dbReference type="PROSITE" id="PS00134">
    <property type="entry name" value="TRYPSIN_HIS"/>
    <property type="match status" value="1"/>
</dbReference>
<dbReference type="PROSITE" id="PS00135">
    <property type="entry name" value="TRYPSIN_SER"/>
    <property type="match status" value="1"/>
</dbReference>
<protein>
    <recommendedName>
        <fullName>Neurotrypsin</fullName>
        <ecNumber>3.4.21.-</ecNumber>
    </recommendedName>
    <alternativeName>
        <fullName>Serine protease 12</fullName>
    </alternativeName>
</protein>
<accession>Q5G266</accession>
<keyword id="KW-1015">Disulfide bond</keyword>
<keyword id="KW-0325">Glycoprotein</keyword>
<keyword id="KW-0378">Hydrolase</keyword>
<keyword id="KW-0420">Kringle</keyword>
<keyword id="KW-0645">Protease</keyword>
<keyword id="KW-0677">Repeat</keyword>
<keyword id="KW-0964">Secreted</keyword>
<keyword id="KW-0720">Serine protease</keyword>
<keyword id="KW-0732">Signal</keyword>
<reference key="1">
    <citation type="journal article" date="2005" name="Cytogenet. Genome Res.">
        <title>Genetic evidence of a strong functional constraint of neurotrypsin during primate evolution.</title>
        <authorList>
            <person name="Xu H.L."/>
            <person name="Su B."/>
        </authorList>
    </citation>
    <scope>NUCLEOTIDE SEQUENCE [GENOMIC DNA]</scope>
</reference>
<sequence length="875" mass="97292">MTLARFVLALVLGALPEVVGFDSVLNDSLHHRHRHSPPPGPQYPYYLPTHQRPPRTRPPPPLPRFSRPPRALLAQRPHALQAGHTPRRHPWGCPPGEPWVSVTDFGAPCLRWAEVPPFLERSPPASWAQLRGQRHNFCRSPDGPGRPWCFYGDARGKVDWGYCDCRHGSVRLRGGKNEFEGTVEVYASGVWGTVCSSHWDDSDASVICHQLQLGGKGIAKQTPFSGLGLIPIYWSNVRCRGDEENILLCEKDIWQXGVCPQKMAAAVTCSFSHGPAFPIIRLVGGNSVHEGRVELYHAGQWGTVCDDQWDDADAEVICRQLGLSGIAKAWHQAYFGEGSGPVMLDEVRCTGNELSIEQCPKSSWGEHNCGHKEDAGVSCTPLTDGVIRLAGGKGSHEGRLEVYYRGQWGTVCDDGWTELNTYVACRQLGFKYGKQASANHFEESTGPIWLDDVSCSGKETRFLQCSRRQWGRHDCSHREDVSIACYPGSEGHRLSLGFPVRLMDGENKKEGRVEVFINGQWGTICDDGWTDKDAAVICRQLGYKGPARARTMAYFGEGKGPIHVDNVKCTGNERSLADCIKQDIGRHNCRHSEDAGVICDYFGKKASGNSNKESLSSVCGLRLLHRRQKRIIGGKNSLRGGWPWQVSLRLKSSHGDGRLLCGATLLSSCWVLTAAHCFKRYGNSTRNYAVRVGDYHTLVPEEFEEEIGVQQIVIHREYRPDSSDYDIALVRLQGPEEQCARFSSHVLPACLPFWRERPQKTASNCYITGWGDTGRAYSRTLQQAAIPLLPKRFCEERYKGRFTGRMLCAGNLHEHKRVDSCQGDSGGPLMCERPGESWAVYGVTSWGYGCGVKDSPGVYTKVSAFVPWIKSVTKL</sequence>
<evidence type="ECO:0000250" key="1"/>
<evidence type="ECO:0000255" key="2"/>
<evidence type="ECO:0000255" key="3">
    <source>
        <dbReference type="PROSITE-ProRule" id="PRU00121"/>
    </source>
</evidence>
<evidence type="ECO:0000255" key="4">
    <source>
        <dbReference type="PROSITE-ProRule" id="PRU00196"/>
    </source>
</evidence>
<evidence type="ECO:0000255" key="5">
    <source>
        <dbReference type="PROSITE-ProRule" id="PRU00274"/>
    </source>
</evidence>
<evidence type="ECO:0000256" key="6">
    <source>
        <dbReference type="SAM" id="MobiDB-lite"/>
    </source>
</evidence>
<comment type="function">
    <text evidence="1">Plays a role in neuronal plasticity and the proteolytic action may subserve structural reorganizations associated with learning and memory operations.</text>
</comment>
<comment type="subcellular location">
    <subcellularLocation>
        <location>Secreted</location>
    </subcellularLocation>
</comment>
<comment type="similarity">
    <text evidence="5">Belongs to the peptidase S1 family.</text>
</comment>
<proteinExistence type="inferred from homology"/>
<gene>
    <name type="primary">PRSS12</name>
</gene>
<organism>
    <name type="scientific">Trachypithecus phayrei</name>
    <name type="common">Phayre's leaf monkey</name>
    <dbReference type="NCBI Taxonomy" id="61618"/>
    <lineage>
        <taxon>Eukaryota</taxon>
        <taxon>Metazoa</taxon>
        <taxon>Chordata</taxon>
        <taxon>Craniata</taxon>
        <taxon>Vertebrata</taxon>
        <taxon>Euteleostomi</taxon>
        <taxon>Mammalia</taxon>
        <taxon>Eutheria</taxon>
        <taxon>Euarchontoglires</taxon>
        <taxon>Primates</taxon>
        <taxon>Haplorrhini</taxon>
        <taxon>Catarrhini</taxon>
        <taxon>Cercopithecidae</taxon>
        <taxon>Colobinae</taxon>
        <taxon>Trachypithecus</taxon>
    </lineage>
</organism>
<name>NETR_TRAPH</name>
<feature type="signal peptide" evidence="2">
    <location>
        <begin position="1"/>
        <end position="20"/>
    </location>
</feature>
<feature type="chain" id="PRO_0000027669" description="Neurotrypsin">
    <location>
        <begin position="21"/>
        <end position="875"/>
    </location>
</feature>
<feature type="domain" description="Kringle" evidence="3">
    <location>
        <begin position="93"/>
        <end position="165"/>
    </location>
</feature>
<feature type="domain" description="SRCR 1" evidence="4">
    <location>
        <begin position="170"/>
        <end position="271"/>
    </location>
</feature>
<feature type="domain" description="SRCR 2" evidence="4">
    <location>
        <begin position="280"/>
        <end position="381"/>
    </location>
</feature>
<feature type="domain" description="SRCR 3" evidence="4">
    <location>
        <begin position="387"/>
        <end position="487"/>
    </location>
</feature>
<feature type="domain" description="SRCR 4" evidence="4">
    <location>
        <begin position="500"/>
        <end position="601"/>
    </location>
</feature>
<feature type="domain" description="Peptidase S1" evidence="5">
    <location>
        <begin position="631"/>
        <end position="874"/>
    </location>
</feature>
<feature type="region of interest" description="Disordered" evidence="6">
    <location>
        <begin position="29"/>
        <end position="68"/>
    </location>
</feature>
<feature type="region of interest" description="Zymogen activation region">
    <location>
        <begin position="619"/>
        <end position="630"/>
    </location>
</feature>
<feature type="active site" description="Charge relay system" evidence="1">
    <location>
        <position position="676"/>
    </location>
</feature>
<feature type="active site" description="Charge relay system" evidence="1">
    <location>
        <position position="726"/>
    </location>
</feature>
<feature type="active site" description="Charge relay system" evidence="1">
    <location>
        <position position="825"/>
    </location>
</feature>
<feature type="site" description="Reactive bond homolog" evidence="2">
    <location>
        <begin position="630"/>
        <end position="631"/>
    </location>
</feature>
<feature type="glycosylation site" description="N-linked (GlcNAc...) asparagine" evidence="2">
    <location>
        <position position="26"/>
    </location>
</feature>
<feature type="glycosylation site" description="N-linked (GlcNAc...) asparagine" evidence="2">
    <location>
        <position position="683"/>
    </location>
</feature>
<feature type="disulfide bond" evidence="1">
    <location>
        <begin position="93"/>
        <end position="165"/>
    </location>
</feature>
<feature type="disulfide bond" evidence="1">
    <location>
        <begin position="109"/>
        <end position="149"/>
    </location>
</feature>
<feature type="disulfide bond" evidence="1">
    <location>
        <begin position="138"/>
        <end position="163"/>
    </location>
</feature>
<feature type="disulfide bond" evidence="1">
    <location>
        <begin position="195"/>
        <end position="259"/>
    </location>
</feature>
<feature type="disulfide bond" evidence="1">
    <location>
        <begin position="208"/>
        <end position="269"/>
    </location>
</feature>
<feature type="disulfide bond" evidence="1">
    <location>
        <begin position="239"/>
        <end position="249"/>
    </location>
</feature>
<feature type="disulfide bond" evidence="1">
    <location>
        <begin position="305"/>
        <end position="369"/>
    </location>
</feature>
<feature type="disulfide bond" evidence="1">
    <location>
        <begin position="318"/>
        <end position="379"/>
    </location>
</feature>
<feature type="disulfide bond" evidence="1">
    <location>
        <begin position="349"/>
        <end position="359"/>
    </location>
</feature>
<feature type="disulfide bond" evidence="1">
    <location>
        <begin position="412"/>
        <end position="475"/>
    </location>
</feature>
<feature type="disulfide bond" evidence="1">
    <location>
        <begin position="425"/>
        <end position="485"/>
    </location>
</feature>
<feature type="disulfide bond" evidence="1">
    <location>
        <begin position="455"/>
        <end position="465"/>
    </location>
</feature>
<feature type="disulfide bond" evidence="1">
    <location>
        <begin position="525"/>
        <end position="589"/>
    </location>
</feature>
<feature type="disulfide bond" evidence="1">
    <location>
        <begin position="538"/>
        <end position="599"/>
    </location>
</feature>
<feature type="disulfide bond" evidence="1">
    <location>
        <begin position="569"/>
        <end position="579"/>
    </location>
</feature>
<feature type="disulfide bond" evidence="2">
    <location>
        <begin position="619"/>
        <end position="750"/>
    </location>
</feature>
<feature type="disulfide bond" evidence="1">
    <location>
        <begin position="661"/>
        <end position="677"/>
    </location>
</feature>
<feature type="disulfide bond" evidence="1">
    <location>
        <begin position="765"/>
        <end position="831"/>
    </location>
</feature>
<feature type="disulfide bond" evidence="1">
    <location>
        <begin position="794"/>
        <end position="808"/>
    </location>
</feature>
<feature type="disulfide bond" evidence="1">
    <location>
        <begin position="821"/>
        <end position="850"/>
    </location>
</feature>